<organism>
    <name type="scientific">Mycobacterium tuberculosis (strain ATCC 25618 / H37Rv)</name>
    <dbReference type="NCBI Taxonomy" id="83332"/>
    <lineage>
        <taxon>Bacteria</taxon>
        <taxon>Bacillati</taxon>
        <taxon>Actinomycetota</taxon>
        <taxon>Actinomycetes</taxon>
        <taxon>Mycobacteriales</taxon>
        <taxon>Mycobacteriaceae</taxon>
        <taxon>Mycobacterium</taxon>
        <taxon>Mycobacterium tuberculosis complex</taxon>
    </lineage>
</organism>
<accession>P71838</accession>
<accession>L0T7Q3</accession>
<feature type="chain" id="PRO_0000403955" description="KsdD-like steroid dehydrogenase Rv0785">
    <location>
        <begin position="1"/>
        <end position="566"/>
    </location>
</feature>
<feature type="binding site" evidence="1">
    <location>
        <begin position="23"/>
        <end position="54"/>
    </location>
    <ligand>
        <name>FAD</name>
        <dbReference type="ChEBI" id="CHEBI:57692"/>
    </ligand>
</feature>
<comment type="function">
    <text evidence="1">Able to catalyze the elimination of the C-1 and C-2 hydrogen atoms of the A-ring from the polycyclic ring structure of 3-ketosteroids.</text>
</comment>
<comment type="cofactor">
    <cofactor evidence="1">
        <name>FAD</name>
        <dbReference type="ChEBI" id="CHEBI:57692"/>
    </cofactor>
</comment>
<comment type="pathway">
    <text>Lipid metabolism; steroid biosynthesis.</text>
</comment>
<comment type="similarity">
    <text evidence="2">Belongs to the FAD-dependent oxidoreductase 2 family.</text>
</comment>
<keyword id="KW-0274">FAD</keyword>
<keyword id="KW-0285">Flavoprotein</keyword>
<keyword id="KW-0442">Lipid degradation</keyword>
<keyword id="KW-0443">Lipid metabolism</keyword>
<keyword id="KW-0560">Oxidoreductase</keyword>
<keyword id="KW-1185">Reference proteome</keyword>
<keyword id="KW-0753">Steroid metabolism</keyword>
<protein>
    <recommendedName>
        <fullName>KsdD-like steroid dehydrogenase Rv0785</fullName>
        <ecNumber>1.3.99.-</ecNumber>
    </recommendedName>
</protein>
<reference key="1">
    <citation type="journal article" date="1998" name="Nature">
        <title>Deciphering the biology of Mycobacterium tuberculosis from the complete genome sequence.</title>
        <authorList>
            <person name="Cole S.T."/>
            <person name="Brosch R."/>
            <person name="Parkhill J."/>
            <person name="Garnier T."/>
            <person name="Churcher C.M."/>
            <person name="Harris D.E."/>
            <person name="Gordon S.V."/>
            <person name="Eiglmeier K."/>
            <person name="Gas S."/>
            <person name="Barry C.E. III"/>
            <person name="Tekaia F."/>
            <person name="Badcock K."/>
            <person name="Basham D."/>
            <person name="Brown D."/>
            <person name="Chillingworth T."/>
            <person name="Connor R."/>
            <person name="Davies R.M."/>
            <person name="Devlin K."/>
            <person name="Feltwell T."/>
            <person name="Gentles S."/>
            <person name="Hamlin N."/>
            <person name="Holroyd S."/>
            <person name="Hornsby T."/>
            <person name="Jagels K."/>
            <person name="Krogh A."/>
            <person name="McLean J."/>
            <person name="Moule S."/>
            <person name="Murphy L.D."/>
            <person name="Oliver S."/>
            <person name="Osborne J."/>
            <person name="Quail M.A."/>
            <person name="Rajandream M.A."/>
            <person name="Rogers J."/>
            <person name="Rutter S."/>
            <person name="Seeger K."/>
            <person name="Skelton S."/>
            <person name="Squares S."/>
            <person name="Squares R."/>
            <person name="Sulston J.E."/>
            <person name="Taylor K."/>
            <person name="Whitehead S."/>
            <person name="Barrell B.G."/>
        </authorList>
    </citation>
    <scope>NUCLEOTIDE SEQUENCE [LARGE SCALE GENOMIC DNA]</scope>
    <source>
        <strain>ATCC 25618 / H37Rv</strain>
    </source>
</reference>
<reference key="2">
    <citation type="journal article" date="2011" name="Mol. Cell. Proteomics">
        <title>Proteogenomic analysis of Mycobacterium tuberculosis by high resolution mass spectrometry.</title>
        <authorList>
            <person name="Kelkar D.S."/>
            <person name="Kumar D."/>
            <person name="Kumar P."/>
            <person name="Balakrishnan L."/>
            <person name="Muthusamy B."/>
            <person name="Yadav A.K."/>
            <person name="Shrivastava P."/>
            <person name="Marimuthu A."/>
            <person name="Anand S."/>
            <person name="Sundaram H."/>
            <person name="Kingsbury R."/>
            <person name="Harsha H.C."/>
            <person name="Nair B."/>
            <person name="Prasad T.S."/>
            <person name="Chauhan D.S."/>
            <person name="Katoch K."/>
            <person name="Katoch V.M."/>
            <person name="Kumar P."/>
            <person name="Chaerkady R."/>
            <person name="Ramachandran S."/>
            <person name="Dash D."/>
            <person name="Pandey A."/>
        </authorList>
    </citation>
    <scope>IDENTIFICATION BY MASS SPECTROMETRY [LARGE SCALE ANALYSIS]</scope>
    <source>
        <strain>ATCC 25618 / H37Rv</strain>
    </source>
</reference>
<proteinExistence type="evidence at protein level"/>
<name>Y0785_MYCTU</name>
<gene>
    <name type="ordered locus">Rv0785</name>
</gene>
<evidence type="ECO:0000250" key="1"/>
<evidence type="ECO:0000305" key="2"/>
<sequence>MALTCTDMSDAVAGSDAEGLTADAIVVGAGLAGLVAACELADRGLRVLILDQENRANVGGQAFWSFGGLFLVNSPEQRRLGIRDSHELALQDWLGTAAFDRPEDYWPEQWAHAYVDFAAGEKRSWLRARGLKIFPLVGWAERGGYDAQGHGNSVPRFHITWGTGPALVDIFVRQLRDRPTVRFAHRHQVDKLIVEGNAVTGVRGTVLEPSDEPRGAPSSRKSVGKFEFRASAVIVASGGIGGNHELVRKNWPRRMGRIPKQLLSGVPAHVDGRMIGIAQKAGAAVINPDRMWHYTEGITNYDPIWPRHGIRIIPGPSSLWLDAAGKRLPVPLFPGFDTLGTLEYITKSGHDYTWFVLNAKIIEKEFALSGQEQNPDLTGRRLGQLLRSRAHAGPPGPVQAFIDRGVDCVHANSLRELVAAMNELPDVVPLDYETVAAAVTARDREVVNKYSKDGQITAIRAARRYRGDRFGRVVAPHRLTDPKAGPLIAVKLHILTRKTLGGIETDLDARVLKADGTPLAGLYAAGEVAGFGGGGVHGYRALEGTFLGGCIFSGRAAGRGAAEDIR</sequence>
<dbReference type="EC" id="1.3.99.-"/>
<dbReference type="EMBL" id="AL123456">
    <property type="protein sequence ID" value="CCP43532.1"/>
    <property type="molecule type" value="Genomic_DNA"/>
</dbReference>
<dbReference type="PIR" id="D70709">
    <property type="entry name" value="D70709"/>
</dbReference>
<dbReference type="RefSeq" id="NP_215299.1">
    <property type="nucleotide sequence ID" value="NC_000962.3"/>
</dbReference>
<dbReference type="RefSeq" id="WP_003911278.1">
    <property type="nucleotide sequence ID" value="NZ_NVQJ01000035.1"/>
</dbReference>
<dbReference type="SMR" id="P71838"/>
<dbReference type="STRING" id="83332.Rv0785"/>
<dbReference type="PaxDb" id="83332-Rv0785"/>
<dbReference type="DNASU" id="885864"/>
<dbReference type="GeneID" id="885864"/>
<dbReference type="KEGG" id="mtu:Rv0785"/>
<dbReference type="KEGG" id="mtv:RVBD_0785"/>
<dbReference type="PATRIC" id="fig|83332.111.peg.870"/>
<dbReference type="TubercuList" id="Rv0785"/>
<dbReference type="eggNOG" id="COG3573">
    <property type="taxonomic scope" value="Bacteria"/>
</dbReference>
<dbReference type="InParanoid" id="P71838"/>
<dbReference type="OrthoDB" id="9813348at2"/>
<dbReference type="PhylomeDB" id="P71838"/>
<dbReference type="UniPathway" id="UPA00062"/>
<dbReference type="Proteomes" id="UP000001584">
    <property type="component" value="Chromosome"/>
</dbReference>
<dbReference type="GO" id="GO:0005886">
    <property type="term" value="C:plasma membrane"/>
    <property type="evidence" value="ECO:0007005"/>
    <property type="project" value="MTBBASE"/>
</dbReference>
<dbReference type="GO" id="GO:0033765">
    <property type="term" value="F:steroid dehydrogenase activity, acting on the CH-CH group of donors"/>
    <property type="evidence" value="ECO:0007669"/>
    <property type="project" value="UniProtKB-ARBA"/>
</dbReference>
<dbReference type="GO" id="GO:0016042">
    <property type="term" value="P:lipid catabolic process"/>
    <property type="evidence" value="ECO:0007669"/>
    <property type="project" value="UniProtKB-KW"/>
</dbReference>
<dbReference type="GO" id="GO:0006694">
    <property type="term" value="P:steroid biosynthetic process"/>
    <property type="evidence" value="ECO:0007669"/>
    <property type="project" value="UniProtKB-UniPathway"/>
</dbReference>
<dbReference type="FunFam" id="3.90.700.10:FF:000011">
    <property type="entry name" value="Putative FAD-binding dehydrogenase"/>
    <property type="match status" value="1"/>
</dbReference>
<dbReference type="Gene3D" id="3.50.50.60">
    <property type="entry name" value="FAD/NAD(P)-binding domain"/>
    <property type="match status" value="1"/>
</dbReference>
<dbReference type="Gene3D" id="3.90.700.10">
    <property type="entry name" value="Succinate dehydrogenase/fumarate reductase flavoprotein, catalytic domain"/>
    <property type="match status" value="1"/>
</dbReference>
<dbReference type="InterPro" id="IPR003953">
    <property type="entry name" value="FAD-dep_OxRdtase_2_FAD-bd"/>
</dbReference>
<dbReference type="InterPro" id="IPR036188">
    <property type="entry name" value="FAD/NAD-bd_sf"/>
</dbReference>
<dbReference type="InterPro" id="IPR014614">
    <property type="entry name" value="KsdD_DH"/>
</dbReference>
<dbReference type="InterPro" id="IPR027477">
    <property type="entry name" value="Succ_DH/fumarate_Rdtase_cat_sf"/>
</dbReference>
<dbReference type="NCBIfam" id="NF009472">
    <property type="entry name" value="PRK12834.1"/>
    <property type="match status" value="1"/>
</dbReference>
<dbReference type="PANTHER" id="PTHR43260">
    <property type="entry name" value="3-KETOSTEROID-DELTA-1-DEHYDROGENASE"/>
    <property type="match status" value="1"/>
</dbReference>
<dbReference type="PANTHER" id="PTHR43260:SF1">
    <property type="entry name" value="KSDD-LIKE STEROID DEHYDROGENASE RV0785"/>
    <property type="match status" value="1"/>
</dbReference>
<dbReference type="Pfam" id="PF00890">
    <property type="entry name" value="FAD_binding_2"/>
    <property type="match status" value="1"/>
</dbReference>
<dbReference type="PIRSF" id="PIRSF036654">
    <property type="entry name" value="UCP036654"/>
    <property type="match status" value="1"/>
</dbReference>
<dbReference type="SUPFAM" id="SSF51905">
    <property type="entry name" value="FAD/NAD(P)-binding domain"/>
    <property type="match status" value="1"/>
</dbReference>